<feature type="chain" id="PRO_1000116495" description="Dihydroxy-acid dehydratase">
    <location>
        <begin position="1"/>
        <end position="560"/>
    </location>
</feature>
<feature type="active site" description="Proton acceptor" evidence="1">
    <location>
        <position position="472"/>
    </location>
</feature>
<feature type="binding site" evidence="1">
    <location>
        <position position="78"/>
    </location>
    <ligand>
        <name>Mg(2+)</name>
        <dbReference type="ChEBI" id="CHEBI:18420"/>
    </ligand>
</feature>
<feature type="binding site" evidence="1">
    <location>
        <position position="119"/>
    </location>
    <ligand>
        <name>[2Fe-2S] cluster</name>
        <dbReference type="ChEBI" id="CHEBI:190135"/>
    </ligand>
</feature>
<feature type="binding site" evidence="1">
    <location>
        <position position="120"/>
    </location>
    <ligand>
        <name>Mg(2+)</name>
        <dbReference type="ChEBI" id="CHEBI:18420"/>
    </ligand>
</feature>
<feature type="binding site" description="via carbamate group" evidence="1">
    <location>
        <position position="121"/>
    </location>
    <ligand>
        <name>Mg(2+)</name>
        <dbReference type="ChEBI" id="CHEBI:18420"/>
    </ligand>
</feature>
<feature type="binding site" evidence="1">
    <location>
        <position position="192"/>
    </location>
    <ligand>
        <name>[2Fe-2S] cluster</name>
        <dbReference type="ChEBI" id="CHEBI:190135"/>
    </ligand>
</feature>
<feature type="binding site" evidence="1">
    <location>
        <position position="446"/>
    </location>
    <ligand>
        <name>Mg(2+)</name>
        <dbReference type="ChEBI" id="CHEBI:18420"/>
    </ligand>
</feature>
<feature type="modified residue" description="N6-carboxylysine" evidence="1">
    <location>
        <position position="121"/>
    </location>
</feature>
<comment type="function">
    <text evidence="1">Functions in the biosynthesis of branched-chain amino acids. Catalyzes the dehydration of (2R,3R)-2,3-dihydroxy-3-methylpentanoate (2,3-dihydroxy-3-methylvalerate) into 2-oxo-3-methylpentanoate (2-oxo-3-methylvalerate) and of (2R)-2,3-dihydroxy-3-methylbutanoate (2,3-dihydroxyisovalerate) into 2-oxo-3-methylbutanoate (2-oxoisovalerate), the penultimate precursor to L-isoleucine and L-valine, respectively.</text>
</comment>
<comment type="catalytic activity">
    <reaction evidence="1">
        <text>(2R)-2,3-dihydroxy-3-methylbutanoate = 3-methyl-2-oxobutanoate + H2O</text>
        <dbReference type="Rhea" id="RHEA:24809"/>
        <dbReference type="ChEBI" id="CHEBI:11851"/>
        <dbReference type="ChEBI" id="CHEBI:15377"/>
        <dbReference type="ChEBI" id="CHEBI:49072"/>
        <dbReference type="EC" id="4.2.1.9"/>
    </reaction>
    <physiologicalReaction direction="left-to-right" evidence="1">
        <dbReference type="Rhea" id="RHEA:24810"/>
    </physiologicalReaction>
</comment>
<comment type="catalytic activity">
    <reaction evidence="1">
        <text>(2R,3R)-2,3-dihydroxy-3-methylpentanoate = (S)-3-methyl-2-oxopentanoate + H2O</text>
        <dbReference type="Rhea" id="RHEA:27694"/>
        <dbReference type="ChEBI" id="CHEBI:15377"/>
        <dbReference type="ChEBI" id="CHEBI:35146"/>
        <dbReference type="ChEBI" id="CHEBI:49258"/>
        <dbReference type="EC" id="4.2.1.9"/>
    </reaction>
    <physiologicalReaction direction="left-to-right" evidence="1">
        <dbReference type="Rhea" id="RHEA:27695"/>
    </physiologicalReaction>
</comment>
<comment type="cofactor">
    <cofactor evidence="1">
        <name>[2Fe-2S] cluster</name>
        <dbReference type="ChEBI" id="CHEBI:190135"/>
    </cofactor>
    <text evidence="1">Binds 1 [2Fe-2S] cluster per subunit. This cluster acts as a Lewis acid cofactor.</text>
</comment>
<comment type="cofactor">
    <cofactor evidence="1">
        <name>Mg(2+)</name>
        <dbReference type="ChEBI" id="CHEBI:18420"/>
    </cofactor>
</comment>
<comment type="pathway">
    <text evidence="1">Amino-acid biosynthesis; L-isoleucine biosynthesis; L-isoleucine from 2-oxobutanoate: step 3/4.</text>
</comment>
<comment type="pathway">
    <text evidence="1">Amino-acid biosynthesis; L-valine biosynthesis; L-valine from pyruvate: step 3/4.</text>
</comment>
<comment type="subunit">
    <text evidence="1">Homodimer.</text>
</comment>
<comment type="similarity">
    <text evidence="1">Belongs to the IlvD/Edd family.</text>
</comment>
<accession>B8JAT1</accession>
<evidence type="ECO:0000255" key="1">
    <source>
        <dbReference type="HAMAP-Rule" id="MF_00012"/>
    </source>
</evidence>
<protein>
    <recommendedName>
        <fullName evidence="1">Dihydroxy-acid dehydratase</fullName>
        <shortName evidence="1">DAD</shortName>
        <ecNumber evidence="1">4.2.1.9</ecNumber>
    </recommendedName>
</protein>
<dbReference type="EC" id="4.2.1.9" evidence="1"/>
<dbReference type="EMBL" id="CP001359">
    <property type="protein sequence ID" value="ACL67580.1"/>
    <property type="molecule type" value="Genomic_DNA"/>
</dbReference>
<dbReference type="RefSeq" id="WP_015935286.1">
    <property type="nucleotide sequence ID" value="NC_011891.1"/>
</dbReference>
<dbReference type="SMR" id="B8JAT1"/>
<dbReference type="KEGG" id="acp:A2cp1_4263"/>
<dbReference type="HOGENOM" id="CLU_014271_4_2_7"/>
<dbReference type="UniPathway" id="UPA00047">
    <property type="reaction ID" value="UER00057"/>
</dbReference>
<dbReference type="UniPathway" id="UPA00049">
    <property type="reaction ID" value="UER00061"/>
</dbReference>
<dbReference type="Proteomes" id="UP000007089">
    <property type="component" value="Chromosome"/>
</dbReference>
<dbReference type="GO" id="GO:0005829">
    <property type="term" value="C:cytosol"/>
    <property type="evidence" value="ECO:0007669"/>
    <property type="project" value="TreeGrafter"/>
</dbReference>
<dbReference type="GO" id="GO:0051537">
    <property type="term" value="F:2 iron, 2 sulfur cluster binding"/>
    <property type="evidence" value="ECO:0007669"/>
    <property type="project" value="UniProtKB-UniRule"/>
</dbReference>
<dbReference type="GO" id="GO:0004160">
    <property type="term" value="F:dihydroxy-acid dehydratase activity"/>
    <property type="evidence" value="ECO:0007669"/>
    <property type="project" value="UniProtKB-UniRule"/>
</dbReference>
<dbReference type="GO" id="GO:0000287">
    <property type="term" value="F:magnesium ion binding"/>
    <property type="evidence" value="ECO:0007669"/>
    <property type="project" value="UniProtKB-UniRule"/>
</dbReference>
<dbReference type="GO" id="GO:0009097">
    <property type="term" value="P:isoleucine biosynthetic process"/>
    <property type="evidence" value="ECO:0007669"/>
    <property type="project" value="UniProtKB-UniRule"/>
</dbReference>
<dbReference type="GO" id="GO:0009099">
    <property type="term" value="P:L-valine biosynthetic process"/>
    <property type="evidence" value="ECO:0007669"/>
    <property type="project" value="UniProtKB-UniRule"/>
</dbReference>
<dbReference type="FunFam" id="3.50.30.80:FF:000001">
    <property type="entry name" value="Dihydroxy-acid dehydratase"/>
    <property type="match status" value="1"/>
</dbReference>
<dbReference type="Gene3D" id="3.50.30.80">
    <property type="entry name" value="IlvD/EDD C-terminal domain-like"/>
    <property type="match status" value="1"/>
</dbReference>
<dbReference type="HAMAP" id="MF_00012">
    <property type="entry name" value="IlvD"/>
    <property type="match status" value="1"/>
</dbReference>
<dbReference type="InterPro" id="IPR042096">
    <property type="entry name" value="Dihydro-acid_dehy_C"/>
</dbReference>
<dbReference type="InterPro" id="IPR004404">
    <property type="entry name" value="DihydroxyA_deHydtase"/>
</dbReference>
<dbReference type="InterPro" id="IPR020558">
    <property type="entry name" value="DiOHA_6PGluconate_deHydtase_CS"/>
</dbReference>
<dbReference type="InterPro" id="IPR056740">
    <property type="entry name" value="ILV_EDD_C"/>
</dbReference>
<dbReference type="InterPro" id="IPR000581">
    <property type="entry name" value="ILV_EDD_N"/>
</dbReference>
<dbReference type="InterPro" id="IPR037237">
    <property type="entry name" value="IlvD/EDD_N"/>
</dbReference>
<dbReference type="NCBIfam" id="TIGR00110">
    <property type="entry name" value="ilvD"/>
    <property type="match status" value="1"/>
</dbReference>
<dbReference type="NCBIfam" id="NF002068">
    <property type="entry name" value="PRK00911.1"/>
    <property type="match status" value="1"/>
</dbReference>
<dbReference type="PANTHER" id="PTHR43661">
    <property type="entry name" value="D-XYLONATE DEHYDRATASE"/>
    <property type="match status" value="1"/>
</dbReference>
<dbReference type="PANTHER" id="PTHR43661:SF3">
    <property type="entry name" value="D-XYLONATE DEHYDRATASE YAGF-RELATED"/>
    <property type="match status" value="1"/>
</dbReference>
<dbReference type="Pfam" id="PF24877">
    <property type="entry name" value="ILV_EDD_C"/>
    <property type="match status" value="1"/>
</dbReference>
<dbReference type="Pfam" id="PF00920">
    <property type="entry name" value="ILVD_EDD_N"/>
    <property type="match status" value="1"/>
</dbReference>
<dbReference type="SUPFAM" id="SSF143975">
    <property type="entry name" value="IlvD/EDD N-terminal domain-like"/>
    <property type="match status" value="1"/>
</dbReference>
<dbReference type="SUPFAM" id="SSF52016">
    <property type="entry name" value="LeuD/IlvD-like"/>
    <property type="match status" value="1"/>
</dbReference>
<dbReference type="PROSITE" id="PS00886">
    <property type="entry name" value="ILVD_EDD_1"/>
    <property type="match status" value="1"/>
</dbReference>
<dbReference type="PROSITE" id="PS00887">
    <property type="entry name" value="ILVD_EDD_2"/>
    <property type="match status" value="1"/>
</dbReference>
<keyword id="KW-0001">2Fe-2S</keyword>
<keyword id="KW-0028">Amino-acid biosynthesis</keyword>
<keyword id="KW-0100">Branched-chain amino acid biosynthesis</keyword>
<keyword id="KW-0408">Iron</keyword>
<keyword id="KW-0411">Iron-sulfur</keyword>
<keyword id="KW-0456">Lyase</keyword>
<keyword id="KW-0460">Magnesium</keyword>
<keyword id="KW-0479">Metal-binding</keyword>
<organism>
    <name type="scientific">Anaeromyxobacter dehalogenans (strain 2CP-1 / ATCC BAA-258)</name>
    <dbReference type="NCBI Taxonomy" id="455488"/>
    <lineage>
        <taxon>Bacteria</taxon>
        <taxon>Pseudomonadati</taxon>
        <taxon>Myxococcota</taxon>
        <taxon>Myxococcia</taxon>
        <taxon>Myxococcales</taxon>
        <taxon>Cystobacterineae</taxon>
        <taxon>Anaeromyxobacteraceae</taxon>
        <taxon>Anaeromyxobacter</taxon>
    </lineage>
</organism>
<sequence>MRSDRIKKGFERAPHRSLLRATGLNDGDFEKPFIGIANSHIDIIPGHYYLQEYGRIAKDEIRKAGGVPFEFNTIGVDDGIAMGHEGMKYSLPSRELIADSIETVMNAHQLDALVCIPNCDKIVPGMLMGALRVNVPTVFVSGGPMKAGHLHDGTPIDLNTAFEAVGKRAQGQLTDAELYEIECQACPSGGSCSGMFTANSMNVLCEAMGVALPGNGTVLALTPEREALVRRAARRAVEIAADERFKLRNIANRDAIHNAMVVDMAMGGSSNTVLHMLAISREAGAPLSLRDIEEIAGKVSHIAKIAPSLATVHMEDIHRAGGVPAVLREAARRGGIVREGALTVTGETVGERIRDARTADPELIRPLENAYSPVGGLAVLFGNLAIEGAVVKTAGIQPSMRRFTGAAICFDSQDEAIAGIMGGKVKPGHFVVIRYEGPKGGPGMQEMLSPTSLIMGMGLGESVALVTDGRFSGATRGACVGHVSPEAAEGGVIGLVQDGDRITIDVEARALTVDVSDAELARRRAGFRPKRRDPGSSWLRRYAHLVTNAANGAVLRSTDL</sequence>
<gene>
    <name evidence="1" type="primary">ilvD</name>
    <name type="ordered locus">A2cp1_4263</name>
</gene>
<name>ILVD_ANAD2</name>
<proteinExistence type="inferred from homology"/>
<reference key="1">
    <citation type="submission" date="2009-01" db="EMBL/GenBank/DDBJ databases">
        <title>Complete sequence of Anaeromyxobacter dehalogenans 2CP-1.</title>
        <authorList>
            <person name="Lucas S."/>
            <person name="Copeland A."/>
            <person name="Lapidus A."/>
            <person name="Glavina del Rio T."/>
            <person name="Dalin E."/>
            <person name="Tice H."/>
            <person name="Bruce D."/>
            <person name="Goodwin L."/>
            <person name="Pitluck S."/>
            <person name="Saunders E."/>
            <person name="Brettin T."/>
            <person name="Detter J.C."/>
            <person name="Han C."/>
            <person name="Larimer F."/>
            <person name="Land M."/>
            <person name="Hauser L."/>
            <person name="Kyrpides N."/>
            <person name="Ovchinnikova G."/>
            <person name="Beliaev A.S."/>
            <person name="Richardson P."/>
        </authorList>
    </citation>
    <scope>NUCLEOTIDE SEQUENCE [LARGE SCALE GENOMIC DNA]</scope>
    <source>
        <strain>2CP-1 / ATCC BAA-258</strain>
    </source>
</reference>